<sequence length="346" mass="36806">MAVNSAAIRWLGDHLQLLDQRCLPTETLWLDICDSQQAADAIRNMVVRGAPAIGITAAYGLALEAQIMGNDASWVTLQNAVATLADSRPTAVNLFWALERLQRYAGDLQGKALAQALAEDAEAIHREDLAANQAMGEFGADLLPSGATVYTHCNTGALATGGHGTALGIIRSAWARNQLTGVFAGETRPWLQGSRLTSWELLNDGIPVTLVADSCAGQLMQQGKIQAVIVGADRITANGDTANKIGTYNLAVLAQHHNIPFIVAAPVSTLDPALPNGSHIVIEERDANEVRNVQGKSLAPEHCPVYNPAFDITPAQLITAIVTERGVVHRPDTAKINSHLAQTKES</sequence>
<evidence type="ECO:0000255" key="1">
    <source>
        <dbReference type="HAMAP-Rule" id="MF_01678"/>
    </source>
</evidence>
<evidence type="ECO:0000305" key="2"/>
<proteinExistence type="inferred from homology"/>
<protein>
    <recommendedName>
        <fullName evidence="1">Methylthioribose-1-phosphate isomerase</fullName>
        <shortName evidence="1">M1Pi</shortName>
        <shortName evidence="1">MTR-1-P isomerase</shortName>
        <ecNumber evidence="1">5.3.1.23</ecNumber>
    </recommendedName>
    <alternativeName>
        <fullName evidence="1">S-methyl-5-thioribose-1-phosphate isomerase</fullName>
    </alternativeName>
</protein>
<organism>
    <name type="scientific">Alcanivorax borkumensis (strain ATCC 700651 / DSM 11573 / NCIMB 13689 / SK2)</name>
    <dbReference type="NCBI Taxonomy" id="393595"/>
    <lineage>
        <taxon>Bacteria</taxon>
        <taxon>Pseudomonadati</taxon>
        <taxon>Pseudomonadota</taxon>
        <taxon>Gammaproteobacteria</taxon>
        <taxon>Oceanospirillales</taxon>
        <taxon>Alcanivoracaceae</taxon>
        <taxon>Alcanivorax</taxon>
    </lineage>
</organism>
<gene>
    <name evidence="1" type="primary">mtnA</name>
    <name type="ordered locus">ABO_1444</name>
</gene>
<feature type="chain" id="PRO_0000357133" description="Methylthioribose-1-phosphate isomerase">
    <location>
        <begin position="1"/>
        <end position="346"/>
    </location>
</feature>
<feature type="active site" description="Proton donor" evidence="1">
    <location>
        <position position="233"/>
    </location>
</feature>
<feature type="binding site" evidence="1">
    <location>
        <begin position="48"/>
        <end position="50"/>
    </location>
    <ligand>
        <name>substrate</name>
    </ligand>
</feature>
<feature type="binding site" evidence="1">
    <location>
        <position position="88"/>
    </location>
    <ligand>
        <name>substrate</name>
    </ligand>
</feature>
<feature type="binding site" evidence="1">
    <location>
        <position position="192"/>
    </location>
    <ligand>
        <name>substrate</name>
    </ligand>
</feature>
<feature type="binding site" evidence="1">
    <location>
        <begin position="243"/>
        <end position="244"/>
    </location>
    <ligand>
        <name>substrate</name>
    </ligand>
</feature>
<feature type="site" description="Transition state stabilizer" evidence="1">
    <location>
        <position position="153"/>
    </location>
</feature>
<dbReference type="EC" id="5.3.1.23" evidence="1"/>
<dbReference type="EMBL" id="AM286690">
    <property type="protein sequence ID" value="CAL16892.1"/>
    <property type="molecule type" value="Genomic_DNA"/>
</dbReference>
<dbReference type="RefSeq" id="WP_011588725.1">
    <property type="nucleotide sequence ID" value="NC_008260.1"/>
</dbReference>
<dbReference type="SMR" id="Q0VPK6"/>
<dbReference type="STRING" id="393595.ABO_1444"/>
<dbReference type="KEGG" id="abo:ABO_1444"/>
<dbReference type="eggNOG" id="COG0182">
    <property type="taxonomic scope" value="Bacteria"/>
</dbReference>
<dbReference type="HOGENOM" id="CLU_016218_1_2_6"/>
<dbReference type="OrthoDB" id="9803436at2"/>
<dbReference type="UniPathway" id="UPA00904">
    <property type="reaction ID" value="UER00874"/>
</dbReference>
<dbReference type="Proteomes" id="UP000008871">
    <property type="component" value="Chromosome"/>
</dbReference>
<dbReference type="GO" id="GO:0046523">
    <property type="term" value="F:S-methyl-5-thioribose-1-phosphate isomerase activity"/>
    <property type="evidence" value="ECO:0007669"/>
    <property type="project" value="UniProtKB-UniRule"/>
</dbReference>
<dbReference type="GO" id="GO:0019509">
    <property type="term" value="P:L-methionine salvage from methylthioadenosine"/>
    <property type="evidence" value="ECO:0007669"/>
    <property type="project" value="UniProtKB-UniRule"/>
</dbReference>
<dbReference type="FunFam" id="1.20.120.420:FF:000003">
    <property type="entry name" value="Methylthioribose-1-phosphate isomerase"/>
    <property type="match status" value="1"/>
</dbReference>
<dbReference type="FunFam" id="3.40.50.10470:FF:000006">
    <property type="entry name" value="Methylthioribose-1-phosphate isomerase"/>
    <property type="match status" value="1"/>
</dbReference>
<dbReference type="Gene3D" id="1.20.120.420">
    <property type="entry name" value="translation initiation factor eif-2b, domain 1"/>
    <property type="match status" value="1"/>
</dbReference>
<dbReference type="Gene3D" id="3.40.50.10470">
    <property type="entry name" value="Translation initiation factor eif-2b, domain 2"/>
    <property type="match status" value="1"/>
</dbReference>
<dbReference type="HAMAP" id="MF_01678">
    <property type="entry name" value="Salvage_MtnA"/>
    <property type="match status" value="1"/>
</dbReference>
<dbReference type="InterPro" id="IPR000649">
    <property type="entry name" value="IF-2B-related"/>
</dbReference>
<dbReference type="InterPro" id="IPR005251">
    <property type="entry name" value="IF-M1Pi"/>
</dbReference>
<dbReference type="InterPro" id="IPR042529">
    <property type="entry name" value="IF_2B-like_C"/>
</dbReference>
<dbReference type="InterPro" id="IPR011559">
    <property type="entry name" value="Initiation_fac_2B_a/b/d"/>
</dbReference>
<dbReference type="InterPro" id="IPR027363">
    <property type="entry name" value="M1Pi_N"/>
</dbReference>
<dbReference type="InterPro" id="IPR037171">
    <property type="entry name" value="NagB/RpiA_transferase-like"/>
</dbReference>
<dbReference type="NCBIfam" id="TIGR00524">
    <property type="entry name" value="eIF-2B_rel"/>
    <property type="match status" value="1"/>
</dbReference>
<dbReference type="NCBIfam" id="NF004326">
    <property type="entry name" value="PRK05720.1"/>
    <property type="match status" value="1"/>
</dbReference>
<dbReference type="NCBIfam" id="TIGR00512">
    <property type="entry name" value="salvage_mtnA"/>
    <property type="match status" value="1"/>
</dbReference>
<dbReference type="PANTHER" id="PTHR43475">
    <property type="entry name" value="METHYLTHIORIBOSE-1-PHOSPHATE ISOMERASE"/>
    <property type="match status" value="1"/>
</dbReference>
<dbReference type="PANTHER" id="PTHR43475:SF1">
    <property type="entry name" value="METHYLTHIORIBOSE-1-PHOSPHATE ISOMERASE"/>
    <property type="match status" value="1"/>
</dbReference>
<dbReference type="Pfam" id="PF01008">
    <property type="entry name" value="IF-2B"/>
    <property type="match status" value="1"/>
</dbReference>
<dbReference type="SUPFAM" id="SSF100950">
    <property type="entry name" value="NagB/RpiA/CoA transferase-like"/>
    <property type="match status" value="1"/>
</dbReference>
<keyword id="KW-0028">Amino-acid biosynthesis</keyword>
<keyword id="KW-0413">Isomerase</keyword>
<keyword id="KW-0486">Methionine biosynthesis</keyword>
<keyword id="KW-1185">Reference proteome</keyword>
<reference key="1">
    <citation type="journal article" date="2006" name="Nat. Biotechnol.">
        <title>Genome sequence of the ubiquitous hydrocarbon-degrading marine bacterium Alcanivorax borkumensis.</title>
        <authorList>
            <person name="Schneiker S."/>
            <person name="Martins dos Santos V.A.P."/>
            <person name="Bartels D."/>
            <person name="Bekel T."/>
            <person name="Brecht M."/>
            <person name="Buhrmester J."/>
            <person name="Chernikova T.N."/>
            <person name="Denaro R."/>
            <person name="Ferrer M."/>
            <person name="Gertler C."/>
            <person name="Goesmann A."/>
            <person name="Golyshina O.V."/>
            <person name="Kaminski F."/>
            <person name="Khachane A.N."/>
            <person name="Lang S."/>
            <person name="Linke B."/>
            <person name="McHardy A.C."/>
            <person name="Meyer F."/>
            <person name="Nechitaylo T."/>
            <person name="Puehler A."/>
            <person name="Regenhardt D."/>
            <person name="Rupp O."/>
            <person name="Sabirova J.S."/>
            <person name="Selbitschka W."/>
            <person name="Yakimov M.M."/>
            <person name="Timmis K.N."/>
            <person name="Vorhoelter F.-J."/>
            <person name="Weidner S."/>
            <person name="Kaiser O."/>
            <person name="Golyshin P.N."/>
        </authorList>
    </citation>
    <scope>NUCLEOTIDE SEQUENCE [LARGE SCALE GENOMIC DNA]</scope>
    <source>
        <strain>ATCC 700651 / DSM 11573 / NCIMB 13689 / SK2</strain>
    </source>
</reference>
<accession>Q0VPK6</accession>
<name>MTNA_ALCBS</name>
<comment type="function">
    <text evidence="1">Catalyzes the interconversion of methylthioribose-1-phosphate (MTR-1-P) into methylthioribulose-1-phosphate (MTRu-1-P).</text>
</comment>
<comment type="catalytic activity">
    <reaction evidence="1">
        <text>5-(methylsulfanyl)-alpha-D-ribose 1-phosphate = 5-(methylsulfanyl)-D-ribulose 1-phosphate</text>
        <dbReference type="Rhea" id="RHEA:19989"/>
        <dbReference type="ChEBI" id="CHEBI:58533"/>
        <dbReference type="ChEBI" id="CHEBI:58548"/>
        <dbReference type="EC" id="5.3.1.23"/>
    </reaction>
</comment>
<comment type="pathway">
    <text evidence="1">Amino-acid biosynthesis; L-methionine biosynthesis via salvage pathway; L-methionine from S-methyl-5-thio-alpha-D-ribose 1-phosphate: step 1/6.</text>
</comment>
<comment type="similarity">
    <text evidence="2">Belongs to the eIF-2B alpha/beta/delta subunits family. MtnA subfamily.</text>
</comment>